<reference key="1">
    <citation type="journal article" date="1989" name="Mol. Endocrinol.">
        <title>Structure and expression of a chicken insulin-like growth factor I precursor.</title>
        <authorList>
            <person name="Kajimoto Y."/>
            <person name="Rotwein P."/>
        </authorList>
    </citation>
    <scope>NUCLEOTIDE SEQUENCE [MRNA]</scope>
</reference>
<reference key="2">
    <citation type="journal article" date="1991" name="J. Biol. Chem.">
        <title>Structure of the chicken insulin-like growth factor I gene reveals conserved promoter elements.</title>
        <authorList>
            <person name="Rotwein P."/>
            <person name="Kajimoto Y."/>
        </authorList>
    </citation>
    <scope>NUCLEOTIDE SEQUENCE [GENOMIC DNA] OF 1-21</scope>
</reference>
<reference key="3">
    <citation type="journal article" date="1990" name="Gen. Comp. Endocrinol.">
        <title>Chicken insulin-like growth factor-I: amino acid sequence, radioimmunoassay, and plasma levels between strains and during growth.</title>
        <authorList>
            <person name="Ballard F.J."/>
            <person name="Johnson R.J."/>
            <person name="Owens P.C."/>
            <person name="Francis G.L."/>
            <person name="Upton F.M."/>
            <person name="McMurtry J.P."/>
            <person name="Wallace J.C."/>
        </authorList>
    </citation>
    <scope>PROTEIN SEQUENCE OF 49-118</scope>
</reference>
<protein>
    <recommendedName>
        <fullName evidence="1">Insulin-like growth factor 1</fullName>
    </recommendedName>
    <alternativeName>
        <fullName evidence="4">Insulin-like growth factor I</fullName>
        <shortName evidence="4">IGF-I</shortName>
    </alternativeName>
    <alternativeName>
        <fullName>Somatomedin</fullName>
    </alternativeName>
</protein>
<sequence length="153" mass="17267">MEKINSLSTQLVKCCFCDFLKVKMHTVSYIHFFYLGLCLLTLTSSAAAGPETLCGAELVDALQFVCGDRGFYFSKPTGYGSSSRRLHHKGIVDECCFQSCDLRRLEMYCAPIKPPKSARSVRAQRHTDMPKAQKEVHLKNTSRGNTGNRNYRM</sequence>
<proteinExistence type="evidence at protein level"/>
<keyword id="KW-0903">Direct protein sequencing</keyword>
<keyword id="KW-1015">Disulfide bond</keyword>
<keyword id="KW-0339">Growth factor</keyword>
<keyword id="KW-1185">Reference proteome</keyword>
<keyword id="KW-0964">Secreted</keyword>
<keyword id="KW-0732">Signal</keyword>
<feature type="signal peptide">
    <location>
        <begin position="1"/>
        <end status="unknown"/>
    </location>
</feature>
<feature type="propeptide" id="PRO_0000015690" evidence="3">
    <location>
        <begin status="unknown"/>
        <end position="48"/>
    </location>
</feature>
<feature type="chain" id="PRO_0000015691" description="Insulin-like growth factor 1">
    <location>
        <begin position="49"/>
        <end position="118"/>
    </location>
</feature>
<feature type="propeptide" id="PRO_0000015692" description="E peptide">
    <location>
        <begin position="119"/>
        <end position="153"/>
    </location>
</feature>
<feature type="region of interest" description="B">
    <location>
        <begin position="49"/>
        <end position="77"/>
    </location>
</feature>
<feature type="region of interest" description="C">
    <location>
        <begin position="78"/>
        <end position="89"/>
    </location>
</feature>
<feature type="region of interest" description="A">
    <location>
        <begin position="90"/>
        <end position="110"/>
    </location>
</feature>
<feature type="region of interest" description="D">
    <location>
        <begin position="111"/>
        <end position="118"/>
    </location>
</feature>
<feature type="region of interest" description="Disordered" evidence="2">
    <location>
        <begin position="119"/>
        <end position="153"/>
    </location>
</feature>
<feature type="compositionally biased region" description="Basic and acidic residues" evidence="2">
    <location>
        <begin position="125"/>
        <end position="138"/>
    </location>
</feature>
<feature type="compositionally biased region" description="Polar residues" evidence="2">
    <location>
        <begin position="139"/>
        <end position="153"/>
    </location>
</feature>
<feature type="disulfide bond" evidence="1">
    <location>
        <begin position="54"/>
        <end position="96"/>
    </location>
</feature>
<feature type="disulfide bond" evidence="1">
    <location>
        <begin position="66"/>
        <end position="109"/>
    </location>
</feature>
<feature type="disulfide bond" evidence="1">
    <location>
        <begin position="95"/>
        <end position="100"/>
    </location>
</feature>
<name>IGF1_CHICK</name>
<gene>
    <name evidence="1" type="primary">IGF1</name>
    <name evidence="1" type="synonym">IGF-1</name>
</gene>
<evidence type="ECO:0000250" key="1">
    <source>
        <dbReference type="UniProtKB" id="P05019"/>
    </source>
</evidence>
<evidence type="ECO:0000256" key="2">
    <source>
        <dbReference type="SAM" id="MobiDB-lite"/>
    </source>
</evidence>
<evidence type="ECO:0000269" key="3">
    <source>
    </source>
</evidence>
<evidence type="ECO:0000303" key="4">
    <source>
    </source>
</evidence>
<evidence type="ECO:0000305" key="5"/>
<accession>P18254</accession>
<dbReference type="EMBL" id="M32791">
    <property type="protein sequence ID" value="AAA48828.1"/>
    <property type="molecule type" value="mRNA"/>
</dbReference>
<dbReference type="EMBL" id="M74176">
    <property type="protein sequence ID" value="AAA48829.1"/>
    <property type="molecule type" value="Genomic_DNA"/>
</dbReference>
<dbReference type="PIR" id="A41399">
    <property type="entry name" value="A41399"/>
</dbReference>
<dbReference type="RefSeq" id="NP_001004384.1">
    <property type="nucleotide sequence ID" value="NM_001004384.3"/>
</dbReference>
<dbReference type="SMR" id="P18254"/>
<dbReference type="FunCoup" id="P18254">
    <property type="interactions" value="291"/>
</dbReference>
<dbReference type="STRING" id="9031.ENSGALP00000020787"/>
<dbReference type="PaxDb" id="9031-ENSGALP00000020787"/>
<dbReference type="GeneID" id="418090"/>
<dbReference type="KEGG" id="gga:418090"/>
<dbReference type="CTD" id="3479"/>
<dbReference type="VEuPathDB" id="HostDB:geneid_418090"/>
<dbReference type="eggNOG" id="ENOG502RCAB">
    <property type="taxonomic scope" value="Eukaryota"/>
</dbReference>
<dbReference type="HOGENOM" id="CLU_123939_0_0_1"/>
<dbReference type="InParanoid" id="P18254"/>
<dbReference type="OMA" id="TLLFKCC"/>
<dbReference type="OrthoDB" id="8936076at2759"/>
<dbReference type="PhylomeDB" id="P18254"/>
<dbReference type="TreeFam" id="TF332820"/>
<dbReference type="Reactome" id="R-GGA-114608">
    <property type="pathway name" value="Platelet degranulation"/>
</dbReference>
<dbReference type="Reactome" id="R-GGA-2404192">
    <property type="pathway name" value="Signaling by Type 1 Insulin-like Growth Factor 1 Receptor (IGF1R)"/>
</dbReference>
<dbReference type="Reactome" id="R-GGA-2428928">
    <property type="pathway name" value="IRS-related events triggered by IGF1R"/>
</dbReference>
<dbReference type="Reactome" id="R-GGA-2428933">
    <property type="pathway name" value="SHC-related events triggered by IGF1R"/>
</dbReference>
<dbReference type="Reactome" id="R-GGA-381426">
    <property type="pathway name" value="Regulation of Insulin-like Growth Factor (IGF) transport and uptake by Insulin-like Growth Factor Binding Proteins (IGFBPs)"/>
</dbReference>
<dbReference type="Reactome" id="R-GGA-422085">
    <property type="pathway name" value="Synthesis, secretion, and deacylation of Ghrelin"/>
</dbReference>
<dbReference type="PRO" id="PR:P18254"/>
<dbReference type="Proteomes" id="UP000000539">
    <property type="component" value="Chromosome 1"/>
</dbReference>
<dbReference type="Bgee" id="ENSGALG00000012755">
    <property type="expression patterns" value="Expressed in liver and 3 other cell types or tissues"/>
</dbReference>
<dbReference type="GO" id="GO:0005615">
    <property type="term" value="C:extracellular space"/>
    <property type="evidence" value="ECO:0000314"/>
    <property type="project" value="AgBase"/>
</dbReference>
<dbReference type="GO" id="GO:0008083">
    <property type="term" value="F:growth factor activity"/>
    <property type="evidence" value="ECO:0007669"/>
    <property type="project" value="UniProtKB-KW"/>
</dbReference>
<dbReference type="GO" id="GO:0005179">
    <property type="term" value="F:hormone activity"/>
    <property type="evidence" value="ECO:0000318"/>
    <property type="project" value="GO_Central"/>
</dbReference>
<dbReference type="GO" id="GO:0005159">
    <property type="term" value="F:insulin-like growth factor receptor binding"/>
    <property type="evidence" value="ECO:0000250"/>
    <property type="project" value="AgBase"/>
</dbReference>
<dbReference type="GO" id="GO:0008283">
    <property type="term" value="P:cell population proliferation"/>
    <property type="evidence" value="ECO:0000314"/>
    <property type="project" value="AgBase"/>
</dbReference>
<dbReference type="GO" id="GO:0090103">
    <property type="term" value="P:cochlea morphogenesis"/>
    <property type="evidence" value="ECO:0000315"/>
    <property type="project" value="AgBase"/>
</dbReference>
<dbReference type="GO" id="GO:0061560">
    <property type="term" value="P:cranial ganglion formation"/>
    <property type="evidence" value="ECO:0000315"/>
    <property type="project" value="AgBase"/>
</dbReference>
<dbReference type="GO" id="GO:0010467">
    <property type="term" value="P:gene expression"/>
    <property type="evidence" value="ECO:0000314"/>
    <property type="project" value="AgBase"/>
</dbReference>
<dbReference type="GO" id="GO:0048009">
    <property type="term" value="P:insulin-like growth factor receptor signaling pathway"/>
    <property type="evidence" value="ECO:0000318"/>
    <property type="project" value="GO_Central"/>
</dbReference>
<dbReference type="GO" id="GO:0043066">
    <property type="term" value="P:negative regulation of apoptotic process"/>
    <property type="evidence" value="ECO:0000250"/>
    <property type="project" value="UniProtKB"/>
</dbReference>
<dbReference type="GO" id="GO:0046676">
    <property type="term" value="P:negative regulation of insulin secretion"/>
    <property type="evidence" value="ECO:0000314"/>
    <property type="project" value="AgBase"/>
</dbReference>
<dbReference type="GO" id="GO:0043524">
    <property type="term" value="P:negative regulation of neuron apoptotic process"/>
    <property type="evidence" value="ECO:0000315"/>
    <property type="project" value="AgBase"/>
</dbReference>
<dbReference type="GO" id="GO:0090201">
    <property type="term" value="P:negative regulation of release of cytochrome c from mitochondria"/>
    <property type="evidence" value="ECO:0000250"/>
    <property type="project" value="UniProtKB"/>
</dbReference>
<dbReference type="GO" id="GO:0007405">
    <property type="term" value="P:neuroblast proliferation"/>
    <property type="evidence" value="ECO:0000315"/>
    <property type="project" value="AgBase"/>
</dbReference>
<dbReference type="GO" id="GO:0008284">
    <property type="term" value="P:positive regulation of cell population proliferation"/>
    <property type="evidence" value="ECO:0000318"/>
    <property type="project" value="GO_Central"/>
</dbReference>
<dbReference type="GO" id="GO:0090277">
    <property type="term" value="P:positive regulation of peptide hormone secretion"/>
    <property type="evidence" value="ECO:0000314"/>
    <property type="project" value="AgBase"/>
</dbReference>
<dbReference type="GO" id="GO:0051897">
    <property type="term" value="P:positive regulation of phosphatidylinositol 3-kinase/protein kinase B signal transduction"/>
    <property type="evidence" value="ECO:0000318"/>
    <property type="project" value="GO_Central"/>
</dbReference>
<dbReference type="GO" id="GO:0045732">
    <property type="term" value="P:positive regulation of protein catabolic process"/>
    <property type="evidence" value="ECO:0000314"/>
    <property type="project" value="AgBase"/>
</dbReference>
<dbReference type="GO" id="GO:0009408">
    <property type="term" value="P:response to heat"/>
    <property type="evidence" value="ECO:0000314"/>
    <property type="project" value="AgBase"/>
</dbReference>
<dbReference type="GO" id="GO:1990418">
    <property type="term" value="P:response to insulin-like growth factor stimulus"/>
    <property type="evidence" value="ECO:0000314"/>
    <property type="project" value="AgBase"/>
</dbReference>
<dbReference type="GO" id="GO:0021650">
    <property type="term" value="P:vestibulocochlear nerve formation"/>
    <property type="evidence" value="ECO:0000315"/>
    <property type="project" value="AgBase"/>
</dbReference>
<dbReference type="CDD" id="cd04368">
    <property type="entry name" value="IlGF"/>
    <property type="match status" value="1"/>
</dbReference>
<dbReference type="FunFam" id="1.10.100.10:FF:000001">
    <property type="entry name" value="insulin-like growth factor I isoform X1"/>
    <property type="match status" value="1"/>
</dbReference>
<dbReference type="Gene3D" id="1.10.100.10">
    <property type="entry name" value="Insulin-like"/>
    <property type="match status" value="1"/>
</dbReference>
<dbReference type="InterPro" id="IPR022341">
    <property type="entry name" value="IGF-I"/>
</dbReference>
<dbReference type="InterPro" id="IPR016179">
    <property type="entry name" value="Insulin-like"/>
</dbReference>
<dbReference type="InterPro" id="IPR022350">
    <property type="entry name" value="Insulin-like_growth_factor"/>
</dbReference>
<dbReference type="InterPro" id="IPR036438">
    <property type="entry name" value="Insulin-like_sf"/>
</dbReference>
<dbReference type="InterPro" id="IPR022353">
    <property type="entry name" value="Insulin_CS"/>
</dbReference>
<dbReference type="InterPro" id="IPR022352">
    <property type="entry name" value="Insulin_family"/>
</dbReference>
<dbReference type="PANTHER" id="PTHR46845">
    <property type="entry name" value="INSULIN-LIKE GROWTH FACTOR I"/>
    <property type="match status" value="1"/>
</dbReference>
<dbReference type="PANTHER" id="PTHR46845:SF1">
    <property type="entry name" value="INSULIN-LIKE GROWTH FACTOR I"/>
    <property type="match status" value="1"/>
</dbReference>
<dbReference type="Pfam" id="PF00049">
    <property type="entry name" value="Insulin"/>
    <property type="match status" value="1"/>
</dbReference>
<dbReference type="PRINTS" id="PR02002">
    <property type="entry name" value="INSLNLIKEGF"/>
</dbReference>
<dbReference type="PRINTS" id="PR02005">
    <property type="entry name" value="INSLNLIKEGF1"/>
</dbReference>
<dbReference type="PRINTS" id="PR00276">
    <property type="entry name" value="INSULINFAMLY"/>
</dbReference>
<dbReference type="SMART" id="SM00078">
    <property type="entry name" value="IlGF"/>
    <property type="match status" value="1"/>
</dbReference>
<dbReference type="SUPFAM" id="SSF56994">
    <property type="entry name" value="Insulin-like"/>
    <property type="match status" value="1"/>
</dbReference>
<dbReference type="PROSITE" id="PS00262">
    <property type="entry name" value="INSULIN"/>
    <property type="match status" value="1"/>
</dbReference>
<organism>
    <name type="scientific">Gallus gallus</name>
    <name type="common">Chicken</name>
    <dbReference type="NCBI Taxonomy" id="9031"/>
    <lineage>
        <taxon>Eukaryota</taxon>
        <taxon>Metazoa</taxon>
        <taxon>Chordata</taxon>
        <taxon>Craniata</taxon>
        <taxon>Vertebrata</taxon>
        <taxon>Euteleostomi</taxon>
        <taxon>Archelosauria</taxon>
        <taxon>Archosauria</taxon>
        <taxon>Dinosauria</taxon>
        <taxon>Saurischia</taxon>
        <taxon>Theropoda</taxon>
        <taxon>Coelurosauria</taxon>
        <taxon>Aves</taxon>
        <taxon>Neognathae</taxon>
        <taxon>Galloanserae</taxon>
        <taxon>Galliformes</taxon>
        <taxon>Phasianidae</taxon>
        <taxon>Phasianinae</taxon>
        <taxon>Gallus</taxon>
    </lineage>
</organism>
<comment type="function">
    <text evidence="1">The insulin-like growth factors, isolated from plasma, are structurally and functionally related to insulin but have a much higher growth-promoting activity. Acts as a ligand for IGF1R. Binds to the alpha subunit of IGF1R, leading to the activation of the intrinsic tyrosine kinase activity which autophosphorylates tyrosine residues in the beta subunit thus initiatiating a cascade of down-stream signaling events leading to activation of the PI3K-AKT/PKB and the Ras-MAPK pathways. Binds to integrins. Its binding to integrins and subsequent ternary complex formation with integrins and IGFR1 are essential for IGF1 signaling.</text>
</comment>
<comment type="subunit">
    <text evidence="1">Forms a ternary complex with IGFR1 and ITGAV:ITGB3. Forms a ternary complex with IGFR1 and ITGA6:ITGB4. Forms a ternary complex with IGFBP3 and ALS.</text>
</comment>
<comment type="subcellular location">
    <subcellularLocation>
        <location>Secreted</location>
    </subcellularLocation>
</comment>
<comment type="similarity">
    <text evidence="5">Belongs to the insulin family.</text>
</comment>